<accession>O83336</accession>
<reference key="1">
    <citation type="journal article" date="1998" name="Science">
        <title>Complete genome sequence of Treponema pallidum, the syphilis spirochete.</title>
        <authorList>
            <person name="Fraser C.M."/>
            <person name="Norris S.J."/>
            <person name="Weinstock G.M."/>
            <person name="White O."/>
            <person name="Sutton G.G."/>
            <person name="Dodson R.J."/>
            <person name="Gwinn M.L."/>
            <person name="Hickey E.K."/>
            <person name="Clayton R.A."/>
            <person name="Ketchum K.A."/>
            <person name="Sodergren E."/>
            <person name="Hardham J.M."/>
            <person name="McLeod M.P."/>
            <person name="Salzberg S.L."/>
            <person name="Peterson J.D."/>
            <person name="Khalak H.G."/>
            <person name="Richardson D.L."/>
            <person name="Howell J.K."/>
            <person name="Chidambaram M."/>
            <person name="Utterback T.R."/>
            <person name="McDonald L.A."/>
            <person name="Artiach P."/>
            <person name="Bowman C."/>
            <person name="Cotton M.D."/>
            <person name="Fujii C."/>
            <person name="Garland S.A."/>
            <person name="Hatch B."/>
            <person name="Horst K."/>
            <person name="Roberts K.M."/>
            <person name="Sandusky M."/>
            <person name="Weidman J.F."/>
            <person name="Smith H.O."/>
            <person name="Venter J.C."/>
        </authorList>
    </citation>
    <scope>NUCLEOTIDE SEQUENCE [LARGE SCALE GENOMIC DNA]</scope>
    <source>
        <strain>Nichols</strain>
    </source>
</reference>
<gene>
    <name type="ordered locus">TP_0314</name>
</gene>
<feature type="chain" id="PRO_0000202232" description="Uncharacterized protein TP_0314">
    <location>
        <begin position="1"/>
        <end position="48"/>
    </location>
</feature>
<sequence length="48" mass="5442">MPVQLGVQHYFSAHWGIDATATVSFGIDTKLAKFRIPYTLRFGPVFRT</sequence>
<keyword id="KW-1185">Reference proteome</keyword>
<name>Y314_TREPA</name>
<dbReference type="EMBL" id="AE000520">
    <property type="protein sequence ID" value="AAC65305.1"/>
    <property type="molecule type" value="Genomic_DNA"/>
</dbReference>
<dbReference type="PIR" id="D71340">
    <property type="entry name" value="D71340"/>
</dbReference>
<dbReference type="IntAct" id="O83336">
    <property type="interactions" value="3"/>
</dbReference>
<dbReference type="STRING" id="243276.TP_0314"/>
<dbReference type="EnsemblBacteria" id="AAC65305">
    <property type="protein sequence ID" value="AAC65305"/>
    <property type="gene ID" value="TP_0314"/>
</dbReference>
<dbReference type="KEGG" id="tpa:TP_0314"/>
<dbReference type="HOGENOM" id="CLU_3159005_0_0_12"/>
<dbReference type="Proteomes" id="UP000000811">
    <property type="component" value="Chromosome"/>
</dbReference>
<dbReference type="InterPro" id="IPR024471">
    <property type="entry name" value="DUF2715"/>
</dbReference>
<dbReference type="Pfam" id="PF10895">
    <property type="entry name" value="DUF2715"/>
    <property type="match status" value="1"/>
</dbReference>
<organism>
    <name type="scientific">Treponema pallidum (strain Nichols)</name>
    <dbReference type="NCBI Taxonomy" id="243276"/>
    <lineage>
        <taxon>Bacteria</taxon>
        <taxon>Pseudomonadati</taxon>
        <taxon>Spirochaetota</taxon>
        <taxon>Spirochaetia</taxon>
        <taxon>Spirochaetales</taxon>
        <taxon>Treponemataceae</taxon>
        <taxon>Treponema</taxon>
    </lineage>
</organism>
<proteinExistence type="predicted"/>
<protein>
    <recommendedName>
        <fullName>Uncharacterized protein TP_0314</fullName>
    </recommendedName>
</protein>